<sequence>MRNFDLSPLMRQWIGFDKLANALQNAGEGQSFPPYNIEKSDDNHYRITLALAGFRQEDLEIQLEGTRLSVKGTPEQPKEEKKWLHQGLMNQPFSLSFTLAENMEVSGATFVNGLLHIDLIRNEPEPIAAQRIAISERPALNS</sequence>
<name>IBPB_SHIB3</name>
<organism>
    <name type="scientific">Shigella boydii serotype 18 (strain CDC 3083-94 / BS512)</name>
    <dbReference type="NCBI Taxonomy" id="344609"/>
    <lineage>
        <taxon>Bacteria</taxon>
        <taxon>Pseudomonadati</taxon>
        <taxon>Pseudomonadota</taxon>
        <taxon>Gammaproteobacteria</taxon>
        <taxon>Enterobacterales</taxon>
        <taxon>Enterobacteriaceae</taxon>
        <taxon>Shigella</taxon>
    </lineage>
</organism>
<protein>
    <recommendedName>
        <fullName evidence="1">Small heat shock protein IbpB</fullName>
    </recommendedName>
    <alternativeName>
        <fullName evidence="1">16 kDa heat shock protein B</fullName>
    </alternativeName>
</protein>
<accession>B2TUT6</accession>
<gene>
    <name evidence="1" type="primary">ibpB</name>
    <name type="ordered locus">SbBS512_E4233</name>
</gene>
<dbReference type="EMBL" id="CP001063">
    <property type="protein sequence ID" value="ACD07660.1"/>
    <property type="molecule type" value="Genomic_DNA"/>
</dbReference>
<dbReference type="RefSeq" id="WP_001243425.1">
    <property type="nucleotide sequence ID" value="NC_010658.1"/>
</dbReference>
<dbReference type="SMR" id="B2TUT6"/>
<dbReference type="STRING" id="344609.SbBS512_E4233"/>
<dbReference type="KEGG" id="sbc:SbBS512_E4233"/>
<dbReference type="HOGENOM" id="CLU_046737_4_2_6"/>
<dbReference type="Proteomes" id="UP000001030">
    <property type="component" value="Chromosome"/>
</dbReference>
<dbReference type="GO" id="GO:0005737">
    <property type="term" value="C:cytoplasm"/>
    <property type="evidence" value="ECO:0007669"/>
    <property type="project" value="UniProtKB-SubCell"/>
</dbReference>
<dbReference type="GO" id="GO:0050821">
    <property type="term" value="P:protein stabilization"/>
    <property type="evidence" value="ECO:0007669"/>
    <property type="project" value="UniProtKB-UniRule"/>
</dbReference>
<dbReference type="CDD" id="cd06470">
    <property type="entry name" value="ACD_IbpA-B_like"/>
    <property type="match status" value="1"/>
</dbReference>
<dbReference type="FunFam" id="2.60.40.790:FF:000005">
    <property type="entry name" value="Small heat shock protein IbpB"/>
    <property type="match status" value="1"/>
</dbReference>
<dbReference type="Gene3D" id="2.60.40.790">
    <property type="match status" value="1"/>
</dbReference>
<dbReference type="HAMAP" id="MF_02001">
    <property type="entry name" value="HSP20_IbpB"/>
    <property type="match status" value="1"/>
</dbReference>
<dbReference type="InterPro" id="IPR002068">
    <property type="entry name" value="A-crystallin/Hsp20_dom"/>
</dbReference>
<dbReference type="InterPro" id="IPR037913">
    <property type="entry name" value="ACD_IbpA/B"/>
</dbReference>
<dbReference type="InterPro" id="IPR008978">
    <property type="entry name" value="HSP20-like_chaperone"/>
</dbReference>
<dbReference type="InterPro" id="IPR022848">
    <property type="entry name" value="HSP20_IbpB"/>
</dbReference>
<dbReference type="NCBIfam" id="NF008618">
    <property type="entry name" value="PRK11597.1"/>
    <property type="match status" value="1"/>
</dbReference>
<dbReference type="PANTHER" id="PTHR47062">
    <property type="match status" value="1"/>
</dbReference>
<dbReference type="PANTHER" id="PTHR47062:SF2">
    <property type="entry name" value="SMALL HEAT SHOCK PROTEIN IBPB"/>
    <property type="match status" value="1"/>
</dbReference>
<dbReference type="Pfam" id="PF00011">
    <property type="entry name" value="HSP20"/>
    <property type="match status" value="1"/>
</dbReference>
<dbReference type="SUPFAM" id="SSF49764">
    <property type="entry name" value="HSP20-like chaperones"/>
    <property type="match status" value="1"/>
</dbReference>
<dbReference type="PROSITE" id="PS01031">
    <property type="entry name" value="SHSP"/>
    <property type="match status" value="1"/>
</dbReference>
<reference key="1">
    <citation type="submission" date="2008-05" db="EMBL/GenBank/DDBJ databases">
        <title>Complete sequence of Shigella boydii serotype 18 strain BS512.</title>
        <authorList>
            <person name="Rasko D.A."/>
            <person name="Rosovitz M."/>
            <person name="Maurelli A.T."/>
            <person name="Myers G."/>
            <person name="Seshadri R."/>
            <person name="Cer R."/>
            <person name="Jiang L."/>
            <person name="Ravel J."/>
            <person name="Sebastian Y."/>
        </authorList>
    </citation>
    <scope>NUCLEOTIDE SEQUENCE [LARGE SCALE GENOMIC DNA]</scope>
    <source>
        <strain>CDC 3083-94 / BS512</strain>
    </source>
</reference>
<feature type="chain" id="PRO_1000189114" description="Small heat shock protein IbpB">
    <location>
        <begin position="1"/>
        <end position="142"/>
    </location>
</feature>
<feature type="domain" description="sHSP" evidence="2">
    <location>
        <begin position="26"/>
        <end position="137"/>
    </location>
</feature>
<keyword id="KW-0143">Chaperone</keyword>
<keyword id="KW-0963">Cytoplasm</keyword>
<keyword id="KW-1185">Reference proteome</keyword>
<keyword id="KW-0346">Stress response</keyword>
<comment type="function">
    <text evidence="1">Associates with aggregated proteins, together with IbpA, to stabilize and protect them from irreversible denaturation and extensive proteolysis during heat shock and oxidative stress. Aggregated proteins bound to the IbpAB complex are more efficiently refolded and reactivated by the ATP-dependent chaperone systems ClpB and DnaK/DnaJ/GrpE. Its activity is ATP-independent.</text>
</comment>
<comment type="subunit">
    <text evidence="1">Homodimer. Forms homomultimers of about 100-150 subunits at optimal growth temperatures. Conformation changes to oligomers at high temperatures or high ionic concentrations. The decrease in size of the multimers is accompanied by an increase in chaperone activity.</text>
</comment>
<comment type="subcellular location">
    <subcellularLocation>
        <location evidence="1">Cytoplasm</location>
    </subcellularLocation>
</comment>
<comment type="domain">
    <text evidence="1">The N- and C-terminal flexible termini are involved in oligomerization and in the binding of non-native substrate proteins, and are essential for chaperone activity.</text>
</comment>
<comment type="similarity">
    <text evidence="1 2">Belongs to the small heat shock protein (HSP20) family.</text>
</comment>
<proteinExistence type="inferred from homology"/>
<evidence type="ECO:0000255" key="1">
    <source>
        <dbReference type="HAMAP-Rule" id="MF_02001"/>
    </source>
</evidence>
<evidence type="ECO:0000255" key="2">
    <source>
        <dbReference type="PROSITE-ProRule" id="PRU00285"/>
    </source>
</evidence>